<gene>
    <name evidence="1" type="primary">nagK</name>
    <name type="ordered locus">SFV_1139</name>
</gene>
<evidence type="ECO:0000255" key="1">
    <source>
        <dbReference type="HAMAP-Rule" id="MF_01271"/>
    </source>
</evidence>
<keyword id="KW-0067">ATP-binding</keyword>
<keyword id="KW-0119">Carbohydrate metabolism</keyword>
<keyword id="KW-0418">Kinase</keyword>
<keyword id="KW-0479">Metal-binding</keyword>
<keyword id="KW-0547">Nucleotide-binding</keyword>
<keyword id="KW-0808">Transferase</keyword>
<keyword id="KW-0862">Zinc</keyword>
<accession>Q0T5R7</accession>
<reference key="1">
    <citation type="journal article" date="2006" name="BMC Genomics">
        <title>Complete genome sequence of Shigella flexneri 5b and comparison with Shigella flexneri 2a.</title>
        <authorList>
            <person name="Nie H."/>
            <person name="Yang F."/>
            <person name="Zhang X."/>
            <person name="Yang J."/>
            <person name="Chen L."/>
            <person name="Wang J."/>
            <person name="Xiong Z."/>
            <person name="Peng J."/>
            <person name="Sun L."/>
            <person name="Dong J."/>
            <person name="Xue Y."/>
            <person name="Xu X."/>
            <person name="Chen S."/>
            <person name="Yao Z."/>
            <person name="Shen Y."/>
            <person name="Jin Q."/>
        </authorList>
    </citation>
    <scope>NUCLEOTIDE SEQUENCE [LARGE SCALE GENOMIC DNA]</scope>
    <source>
        <strain>8401</strain>
    </source>
</reference>
<comment type="function">
    <text evidence="1">Catalyzes the phosphorylation of N-acetyl-D-glucosamine (GlcNAc) derived from cell-wall degradation, yielding GlcNAc-6-P.</text>
</comment>
<comment type="catalytic activity">
    <reaction evidence="1">
        <text>N-acetyl-D-glucosamine + ATP = N-acetyl-D-glucosamine 6-phosphate + ADP + H(+)</text>
        <dbReference type="Rhea" id="RHEA:17417"/>
        <dbReference type="ChEBI" id="CHEBI:15378"/>
        <dbReference type="ChEBI" id="CHEBI:30616"/>
        <dbReference type="ChEBI" id="CHEBI:57513"/>
        <dbReference type="ChEBI" id="CHEBI:456216"/>
        <dbReference type="ChEBI" id="CHEBI:506227"/>
        <dbReference type="EC" id="2.7.1.59"/>
    </reaction>
</comment>
<comment type="pathway">
    <text evidence="1">Cell wall biogenesis; peptidoglycan recycling.</text>
</comment>
<comment type="similarity">
    <text evidence="1">Belongs to the ROK (NagC/XylR) family. NagK subfamily.</text>
</comment>
<sequence length="303" mass="32987">MYYGFDIGGTKIALGVFDSGRQLQWEKRVPTPRDSYDAFLDAVCELVAEADQRFGCKGSVGIGIPGMPETEDGKLYAANVPAASGKPLRADLSARLDRDVRLDNDANCFALSEAWDDEFTQYPLVMGLILGTGVGGGLVFNGKPITGKSYITGEFGHMRLPVDALTMMGLDFPLRRCGCGQHGCIENYLSGRGFAWLYQHYYHQPLQAPEIIALYDQGDEQARAHVERYLDLLAVSLGNILTIVDPDLVVIGGGLSNFPAITTQLADRLPCHLLPVARVPRIERARHGDAGGMRGAAFLHLTD</sequence>
<name>NAGK_SHIF8</name>
<feature type="chain" id="PRO_0000301942" description="N-acetyl-D-glucosamine kinase">
    <location>
        <begin position="1"/>
        <end position="303"/>
    </location>
</feature>
<feature type="binding site" evidence="1">
    <location>
        <begin position="4"/>
        <end position="11"/>
    </location>
    <ligand>
        <name>ATP</name>
        <dbReference type="ChEBI" id="CHEBI:30616"/>
    </ligand>
</feature>
<feature type="binding site" evidence="1">
    <location>
        <begin position="133"/>
        <end position="140"/>
    </location>
    <ligand>
        <name>ATP</name>
        <dbReference type="ChEBI" id="CHEBI:30616"/>
    </ligand>
</feature>
<feature type="binding site" evidence="1">
    <location>
        <position position="157"/>
    </location>
    <ligand>
        <name>Zn(2+)</name>
        <dbReference type="ChEBI" id="CHEBI:29105"/>
    </ligand>
</feature>
<feature type="binding site" evidence="1">
    <location>
        <position position="177"/>
    </location>
    <ligand>
        <name>Zn(2+)</name>
        <dbReference type="ChEBI" id="CHEBI:29105"/>
    </ligand>
</feature>
<feature type="binding site" evidence="1">
    <location>
        <position position="179"/>
    </location>
    <ligand>
        <name>Zn(2+)</name>
        <dbReference type="ChEBI" id="CHEBI:29105"/>
    </ligand>
</feature>
<feature type="binding site" evidence="1">
    <location>
        <position position="184"/>
    </location>
    <ligand>
        <name>Zn(2+)</name>
        <dbReference type="ChEBI" id="CHEBI:29105"/>
    </ligand>
</feature>
<proteinExistence type="inferred from homology"/>
<organism>
    <name type="scientific">Shigella flexneri serotype 5b (strain 8401)</name>
    <dbReference type="NCBI Taxonomy" id="373384"/>
    <lineage>
        <taxon>Bacteria</taxon>
        <taxon>Pseudomonadati</taxon>
        <taxon>Pseudomonadota</taxon>
        <taxon>Gammaproteobacteria</taxon>
        <taxon>Enterobacterales</taxon>
        <taxon>Enterobacteriaceae</taxon>
        <taxon>Shigella</taxon>
    </lineage>
</organism>
<dbReference type="EC" id="2.7.1.59" evidence="1"/>
<dbReference type="EMBL" id="CP000266">
    <property type="protein sequence ID" value="ABF03348.1"/>
    <property type="molecule type" value="Genomic_DNA"/>
</dbReference>
<dbReference type="RefSeq" id="WP_000291255.1">
    <property type="nucleotide sequence ID" value="NC_008258.1"/>
</dbReference>
<dbReference type="SMR" id="Q0T5R7"/>
<dbReference type="KEGG" id="sfv:SFV_1139"/>
<dbReference type="HOGENOM" id="CLU_036604_0_3_6"/>
<dbReference type="UniPathway" id="UPA00544"/>
<dbReference type="Proteomes" id="UP000000659">
    <property type="component" value="Chromosome"/>
</dbReference>
<dbReference type="GO" id="GO:0005524">
    <property type="term" value="F:ATP binding"/>
    <property type="evidence" value="ECO:0007669"/>
    <property type="project" value="UniProtKB-UniRule"/>
</dbReference>
<dbReference type="GO" id="GO:0045127">
    <property type="term" value="F:N-acetylglucosamine kinase activity"/>
    <property type="evidence" value="ECO:0007669"/>
    <property type="project" value="UniProtKB-UniRule"/>
</dbReference>
<dbReference type="GO" id="GO:0008270">
    <property type="term" value="F:zinc ion binding"/>
    <property type="evidence" value="ECO:0007669"/>
    <property type="project" value="UniProtKB-UniRule"/>
</dbReference>
<dbReference type="GO" id="GO:0006044">
    <property type="term" value="P:N-acetylglucosamine metabolic process"/>
    <property type="evidence" value="ECO:0007669"/>
    <property type="project" value="UniProtKB-UniRule"/>
</dbReference>
<dbReference type="GO" id="GO:0009254">
    <property type="term" value="P:peptidoglycan turnover"/>
    <property type="evidence" value="ECO:0007669"/>
    <property type="project" value="UniProtKB-UniRule"/>
</dbReference>
<dbReference type="CDD" id="cd24057">
    <property type="entry name" value="ASKHA_NBD_ROK_NAGK"/>
    <property type="match status" value="1"/>
</dbReference>
<dbReference type="FunFam" id="3.30.420.40:FF:000049">
    <property type="entry name" value="N-acetyl-D-glucosamine kinase"/>
    <property type="match status" value="1"/>
</dbReference>
<dbReference type="FunFam" id="3.30.420.40:FF:000051">
    <property type="entry name" value="N-acetyl-D-glucosamine kinase"/>
    <property type="match status" value="1"/>
</dbReference>
<dbReference type="Gene3D" id="3.30.420.40">
    <property type="match status" value="2"/>
</dbReference>
<dbReference type="HAMAP" id="MF_01271">
    <property type="entry name" value="GlcNAc_kinase"/>
    <property type="match status" value="1"/>
</dbReference>
<dbReference type="InterPro" id="IPR043129">
    <property type="entry name" value="ATPase_NBD"/>
</dbReference>
<dbReference type="InterPro" id="IPR023505">
    <property type="entry name" value="N-acetyl-D-glucosamine_kinase"/>
</dbReference>
<dbReference type="InterPro" id="IPR000600">
    <property type="entry name" value="ROK"/>
</dbReference>
<dbReference type="InterPro" id="IPR049874">
    <property type="entry name" value="ROK_cs"/>
</dbReference>
<dbReference type="NCBIfam" id="NF009835">
    <property type="entry name" value="PRK13310.1"/>
    <property type="match status" value="1"/>
</dbReference>
<dbReference type="PANTHER" id="PTHR18964:SF162">
    <property type="entry name" value="N-ACETYL-D-GLUCOSAMINE KINASE"/>
    <property type="match status" value="1"/>
</dbReference>
<dbReference type="PANTHER" id="PTHR18964">
    <property type="entry name" value="ROK (REPRESSOR, ORF, KINASE) FAMILY"/>
    <property type="match status" value="1"/>
</dbReference>
<dbReference type="Pfam" id="PF00480">
    <property type="entry name" value="ROK"/>
    <property type="match status" value="1"/>
</dbReference>
<dbReference type="SUPFAM" id="SSF53067">
    <property type="entry name" value="Actin-like ATPase domain"/>
    <property type="match status" value="1"/>
</dbReference>
<dbReference type="PROSITE" id="PS01125">
    <property type="entry name" value="ROK"/>
    <property type="match status" value="1"/>
</dbReference>
<protein>
    <recommendedName>
        <fullName evidence="1">N-acetyl-D-glucosamine kinase</fullName>
        <ecNumber evidence="1">2.7.1.59</ecNumber>
    </recommendedName>
    <alternativeName>
        <fullName evidence="1">GlcNAc kinase</fullName>
    </alternativeName>
</protein>